<proteinExistence type="inferred from homology"/>
<accession>Q8ZN74</accession>
<comment type="function">
    <text evidence="1">Catalyzes the formation of N(4)-acetylcytidine (ac(4)C) at the wobble position of tRNA(Met), by using acetyl-CoA as an acetyl donor and ATP (or GTP).</text>
</comment>
<comment type="catalytic activity">
    <reaction evidence="1">
        <text>cytidine(34) in elongator tRNA(Met) + acetyl-CoA + ATP + H2O = N(4)-acetylcytidine(34) in elongator tRNA(Met) + ADP + phosphate + CoA + H(+)</text>
        <dbReference type="Rhea" id="RHEA:43788"/>
        <dbReference type="Rhea" id="RHEA-COMP:10693"/>
        <dbReference type="Rhea" id="RHEA-COMP:10694"/>
        <dbReference type="ChEBI" id="CHEBI:15377"/>
        <dbReference type="ChEBI" id="CHEBI:15378"/>
        <dbReference type="ChEBI" id="CHEBI:30616"/>
        <dbReference type="ChEBI" id="CHEBI:43474"/>
        <dbReference type="ChEBI" id="CHEBI:57287"/>
        <dbReference type="ChEBI" id="CHEBI:57288"/>
        <dbReference type="ChEBI" id="CHEBI:74900"/>
        <dbReference type="ChEBI" id="CHEBI:82748"/>
        <dbReference type="ChEBI" id="CHEBI:456216"/>
        <dbReference type="EC" id="2.3.1.193"/>
    </reaction>
</comment>
<comment type="subcellular location">
    <subcellularLocation>
        <location evidence="1">Cytoplasm</location>
    </subcellularLocation>
</comment>
<comment type="similarity">
    <text evidence="1">Belongs to the RNA cytidine acetyltransferase family. TmcA subfamily.</text>
</comment>
<keyword id="KW-0012">Acyltransferase</keyword>
<keyword id="KW-0067">ATP-binding</keyword>
<keyword id="KW-0963">Cytoplasm</keyword>
<keyword id="KW-0547">Nucleotide-binding</keyword>
<keyword id="KW-1185">Reference proteome</keyword>
<keyword id="KW-0694">RNA-binding</keyword>
<keyword id="KW-0808">Transferase</keyword>
<keyword id="KW-0819">tRNA processing</keyword>
<keyword id="KW-0820">tRNA-binding</keyword>
<sequence length="672" mass="74016">MSDIDALQALTSQMTQEGIRRLLVISGDAAWCRKRAEAIRAALPGDWLWVAPDAPAQPCCTPQALQTLLGREFRHAIFDAWQGFDAAAFAALSGTLQAGSWLLLLMPPYETWESRPDTDSLRWSDCAQPIPTPQFAQHLKRTLSRDPQTLLWRQRQPFCWPSYPSRECWRPATGEPQPEQAAILSRLREMPPGVATVIAPRGRGKSALAGQFISRMAGTAIVTAPAKTATDILAAFAGERFCFMAPDALLASGARADWLVVDEAAAIPTPLLLQLVSRFPRILLTTTVQGYEGTGRGFLLKFCARFPQLHRFTLRQPVRWAPECPLENIVSEALIFDDEAFAQAPHGAIEISAFYQQAWVNTPALPRAVYQLLSGAHYRTSPLDLRRMMDAPGQHFLQATANNRVAGALWLVEEGGLSAELSQAVWCGFRRPRGNLVAQSLAAHGSDPLAATLVGRRVSRIAVHPARQREGIGQQLIACACMQAAQCDYLSVSFGYTPKLWRFWQRCGFVLVRMGNHREASSGCYTAMALLPLSDAGKRLAQQEHRRLRRDADILTQWNGEAIPLAALREQALNDEDWRELVGFAFAHRPLLTSLGCLHRLLQYSALPLPALRGRLEEKASDAELCARLRISGRKALLALQRAQAAQALIALDAGRTQSLRDVMPGGGDHAG</sequence>
<evidence type="ECO:0000255" key="1">
    <source>
        <dbReference type="HAMAP-Rule" id="MF_01886"/>
    </source>
</evidence>
<feature type="chain" id="PRO_0000403124" description="tRNA(Met) cytidine acetyltransferase TmcA">
    <location>
        <begin position="1"/>
        <end position="672"/>
    </location>
</feature>
<feature type="domain" description="N-acetyltransferase" evidence="1">
    <location>
        <begin position="349"/>
        <end position="531"/>
    </location>
</feature>
<feature type="binding site" evidence="1">
    <location>
        <position position="180"/>
    </location>
    <ligand>
        <name>ATP</name>
        <dbReference type="ChEBI" id="CHEBI:30616"/>
    </ligand>
</feature>
<feature type="binding site" evidence="1">
    <location>
        <begin position="202"/>
        <end position="211"/>
    </location>
    <ligand>
        <name>ATP</name>
        <dbReference type="ChEBI" id="CHEBI:30616"/>
    </ligand>
</feature>
<feature type="binding site" evidence="1">
    <location>
        <position position="319"/>
    </location>
    <ligand>
        <name>ATP</name>
        <dbReference type="ChEBI" id="CHEBI:30616"/>
    </ligand>
</feature>
<feature type="binding site" evidence="1">
    <location>
        <begin position="461"/>
        <end position="463"/>
    </location>
    <ligand>
        <name>acetyl-CoA</name>
        <dbReference type="ChEBI" id="CHEBI:57288"/>
    </ligand>
</feature>
<feature type="binding site" evidence="1">
    <location>
        <begin position="468"/>
        <end position="474"/>
    </location>
    <ligand>
        <name>acetyl-CoA</name>
        <dbReference type="ChEBI" id="CHEBI:57288"/>
    </ligand>
</feature>
<feature type="binding site" evidence="1">
    <location>
        <position position="506"/>
    </location>
    <ligand>
        <name>acetyl-CoA</name>
        <dbReference type="ChEBI" id="CHEBI:57288"/>
    </ligand>
</feature>
<organism>
    <name type="scientific">Salmonella typhimurium (strain LT2 / SGSC1412 / ATCC 700720)</name>
    <dbReference type="NCBI Taxonomy" id="99287"/>
    <lineage>
        <taxon>Bacteria</taxon>
        <taxon>Pseudomonadati</taxon>
        <taxon>Pseudomonadota</taxon>
        <taxon>Gammaproteobacteria</taxon>
        <taxon>Enterobacterales</taxon>
        <taxon>Enterobacteriaceae</taxon>
        <taxon>Salmonella</taxon>
    </lineage>
</organism>
<reference key="1">
    <citation type="journal article" date="2001" name="Nature">
        <title>Complete genome sequence of Salmonella enterica serovar Typhimurium LT2.</title>
        <authorList>
            <person name="McClelland M."/>
            <person name="Sanderson K.E."/>
            <person name="Spieth J."/>
            <person name="Clifton S.W."/>
            <person name="Latreille P."/>
            <person name="Courtney L."/>
            <person name="Porwollik S."/>
            <person name="Ali J."/>
            <person name="Dante M."/>
            <person name="Du F."/>
            <person name="Hou S."/>
            <person name="Layman D."/>
            <person name="Leonard S."/>
            <person name="Nguyen C."/>
            <person name="Scott K."/>
            <person name="Holmes A."/>
            <person name="Grewal N."/>
            <person name="Mulvaney E."/>
            <person name="Ryan E."/>
            <person name="Sun H."/>
            <person name="Florea L."/>
            <person name="Miller W."/>
            <person name="Stoneking T."/>
            <person name="Nhan M."/>
            <person name="Waterston R."/>
            <person name="Wilson R.K."/>
        </authorList>
    </citation>
    <scope>NUCLEOTIDE SEQUENCE [LARGE SCALE GENOMIC DNA]</scope>
    <source>
        <strain>LT2 / SGSC1412 / ATCC 700720</strain>
    </source>
</reference>
<dbReference type="EC" id="2.3.1.193" evidence="1"/>
<dbReference type="EMBL" id="AE006468">
    <property type="protein sequence ID" value="AAL21379.1"/>
    <property type="molecule type" value="Genomic_DNA"/>
</dbReference>
<dbReference type="RefSeq" id="WP_001279831.1">
    <property type="nucleotide sequence ID" value="NC_003197.2"/>
</dbReference>
<dbReference type="SMR" id="Q8ZN74"/>
<dbReference type="STRING" id="99287.STM2485"/>
<dbReference type="PaxDb" id="99287-STM2485"/>
<dbReference type="KEGG" id="stm:STM2485"/>
<dbReference type="PATRIC" id="fig|99287.12.peg.2623"/>
<dbReference type="HOGENOM" id="CLU_004652_1_1_6"/>
<dbReference type="OMA" id="HYRTEPN"/>
<dbReference type="PhylomeDB" id="Q8ZN74"/>
<dbReference type="BioCyc" id="SENT99287:STM2485-MONOMER"/>
<dbReference type="Proteomes" id="UP000001014">
    <property type="component" value="Chromosome"/>
</dbReference>
<dbReference type="GO" id="GO:0005737">
    <property type="term" value="C:cytoplasm"/>
    <property type="evidence" value="ECO:0007669"/>
    <property type="project" value="UniProtKB-SubCell"/>
</dbReference>
<dbReference type="GO" id="GO:1990883">
    <property type="term" value="F:18S rRNA cytidine N-acetyltransferase activity"/>
    <property type="evidence" value="ECO:0000318"/>
    <property type="project" value="GO_Central"/>
</dbReference>
<dbReference type="GO" id="GO:0005524">
    <property type="term" value="F:ATP binding"/>
    <property type="evidence" value="ECO:0007669"/>
    <property type="project" value="UniProtKB-UniRule"/>
</dbReference>
<dbReference type="GO" id="GO:0000049">
    <property type="term" value="F:tRNA binding"/>
    <property type="evidence" value="ECO:0000318"/>
    <property type="project" value="GO_Central"/>
</dbReference>
<dbReference type="GO" id="GO:0051392">
    <property type="term" value="F:tRNA N4-acetyltransferase activity"/>
    <property type="evidence" value="ECO:0000318"/>
    <property type="project" value="GO_Central"/>
</dbReference>
<dbReference type="GO" id="GO:1904812">
    <property type="term" value="P:rRNA acetylation involved in maturation of SSU-rRNA"/>
    <property type="evidence" value="ECO:0000318"/>
    <property type="project" value="GO_Central"/>
</dbReference>
<dbReference type="GO" id="GO:0051391">
    <property type="term" value="P:tRNA acetylation"/>
    <property type="evidence" value="ECO:0000318"/>
    <property type="project" value="GO_Central"/>
</dbReference>
<dbReference type="GO" id="GO:0002101">
    <property type="term" value="P:tRNA wobble cytosine modification"/>
    <property type="evidence" value="ECO:0000318"/>
    <property type="project" value="GO_Central"/>
</dbReference>
<dbReference type="CDD" id="cd04301">
    <property type="entry name" value="NAT_SF"/>
    <property type="match status" value="1"/>
</dbReference>
<dbReference type="FunFam" id="1.20.120.890:FF:000001">
    <property type="entry name" value="tRNA(Met) cytidine acetyltransferase TmcA"/>
    <property type="match status" value="1"/>
</dbReference>
<dbReference type="FunFam" id="3.40.50.11040:FF:000003">
    <property type="entry name" value="tRNA(Met) cytidine acetyltransferase TmcA"/>
    <property type="match status" value="1"/>
</dbReference>
<dbReference type="FunFam" id="3.40.50.300:FF:001011">
    <property type="entry name" value="tRNA(Met) cytidine acetyltransferase TmcA"/>
    <property type="match status" value="1"/>
</dbReference>
<dbReference type="FunFam" id="3.40.630.30:FF:000054">
    <property type="entry name" value="tRNA(Met) cytidine acetyltransferase TmcA"/>
    <property type="match status" value="1"/>
</dbReference>
<dbReference type="Gene3D" id="3.40.50.11040">
    <property type="match status" value="1"/>
</dbReference>
<dbReference type="Gene3D" id="3.40.630.30">
    <property type="match status" value="1"/>
</dbReference>
<dbReference type="Gene3D" id="3.40.50.300">
    <property type="entry name" value="P-loop containing nucleotide triphosphate hydrolases"/>
    <property type="match status" value="1"/>
</dbReference>
<dbReference type="Gene3D" id="1.20.120.890">
    <property type="entry name" value="tRNA(Met) cytidine acetyltransferase, tail domain"/>
    <property type="match status" value="1"/>
</dbReference>
<dbReference type="HAMAP" id="MF_01886">
    <property type="entry name" value="tRNA_acetyltr_TmcA"/>
    <property type="match status" value="1"/>
</dbReference>
<dbReference type="InterPro" id="IPR016181">
    <property type="entry name" value="Acyl_CoA_acyltransferase"/>
</dbReference>
<dbReference type="InterPro" id="IPR000182">
    <property type="entry name" value="GNAT_dom"/>
</dbReference>
<dbReference type="InterPro" id="IPR007807">
    <property type="entry name" value="NAT10/TcmA_helicase"/>
</dbReference>
<dbReference type="InterPro" id="IPR027417">
    <property type="entry name" value="P-loop_NTPase"/>
</dbReference>
<dbReference type="InterPro" id="IPR032672">
    <property type="entry name" value="TmcA/NAT10/Kre33"/>
</dbReference>
<dbReference type="InterPro" id="IPR038321">
    <property type="entry name" value="TmcA_C_sf"/>
</dbReference>
<dbReference type="InterPro" id="IPR013562">
    <property type="entry name" value="TmcA_N"/>
</dbReference>
<dbReference type="InterPro" id="IPR033442">
    <property type="entry name" value="TmcA_tRNA_bind"/>
</dbReference>
<dbReference type="InterPro" id="IPR024914">
    <property type="entry name" value="tRNA_acetyltr_TmcA"/>
</dbReference>
<dbReference type="PANTHER" id="PTHR10925">
    <property type="entry name" value="N-ACETYLTRANSFERASE 10"/>
    <property type="match status" value="1"/>
</dbReference>
<dbReference type="PANTHER" id="PTHR10925:SF5">
    <property type="entry name" value="RNA CYTIDINE ACETYLTRANSFERASE"/>
    <property type="match status" value="1"/>
</dbReference>
<dbReference type="Pfam" id="PF13718">
    <property type="entry name" value="GNAT_acetyltr_2"/>
    <property type="match status" value="2"/>
</dbReference>
<dbReference type="Pfam" id="PF05127">
    <property type="entry name" value="NAT10_TcmA_helicase"/>
    <property type="match status" value="1"/>
</dbReference>
<dbReference type="Pfam" id="PF08351">
    <property type="entry name" value="TmcA_N"/>
    <property type="match status" value="1"/>
</dbReference>
<dbReference type="Pfam" id="PF17176">
    <property type="entry name" value="tRNA_bind_3"/>
    <property type="match status" value="1"/>
</dbReference>
<dbReference type="SUPFAM" id="SSF55729">
    <property type="entry name" value="Acyl-CoA N-acyltransferases (Nat)"/>
    <property type="match status" value="1"/>
</dbReference>
<dbReference type="SUPFAM" id="SSF52540">
    <property type="entry name" value="P-loop containing nucleoside triphosphate hydrolases"/>
    <property type="match status" value="1"/>
</dbReference>
<dbReference type="PROSITE" id="PS51186">
    <property type="entry name" value="GNAT"/>
    <property type="match status" value="1"/>
</dbReference>
<name>TMCA_SALTY</name>
<protein>
    <recommendedName>
        <fullName evidence="1">tRNA(Met) cytidine acetyltransferase TmcA</fullName>
        <ecNumber evidence="1">2.3.1.193</ecNumber>
    </recommendedName>
</protein>
<gene>
    <name evidence="1" type="primary">tmcA</name>
    <name type="ordered locus">STM2485</name>
</gene>